<dbReference type="EC" id="2.7.7.8" evidence="1"/>
<dbReference type="EMBL" id="CP000056">
    <property type="protein sequence ID" value="AAX72758.1"/>
    <property type="molecule type" value="Genomic_DNA"/>
</dbReference>
<dbReference type="RefSeq" id="WP_011285185.1">
    <property type="nucleotide sequence ID" value="NC_007296.2"/>
</dbReference>
<dbReference type="SMR" id="Q48RA2"/>
<dbReference type="KEGG" id="spb:M28_Spy1648"/>
<dbReference type="HOGENOM" id="CLU_004217_2_2_9"/>
<dbReference type="GO" id="GO:0005829">
    <property type="term" value="C:cytosol"/>
    <property type="evidence" value="ECO:0007669"/>
    <property type="project" value="TreeGrafter"/>
</dbReference>
<dbReference type="GO" id="GO:0000175">
    <property type="term" value="F:3'-5'-RNA exonuclease activity"/>
    <property type="evidence" value="ECO:0007669"/>
    <property type="project" value="TreeGrafter"/>
</dbReference>
<dbReference type="GO" id="GO:0000287">
    <property type="term" value="F:magnesium ion binding"/>
    <property type="evidence" value="ECO:0007669"/>
    <property type="project" value="UniProtKB-UniRule"/>
</dbReference>
<dbReference type="GO" id="GO:0004654">
    <property type="term" value="F:polyribonucleotide nucleotidyltransferase activity"/>
    <property type="evidence" value="ECO:0007669"/>
    <property type="project" value="UniProtKB-UniRule"/>
</dbReference>
<dbReference type="GO" id="GO:0003723">
    <property type="term" value="F:RNA binding"/>
    <property type="evidence" value="ECO:0007669"/>
    <property type="project" value="UniProtKB-UniRule"/>
</dbReference>
<dbReference type="GO" id="GO:0006402">
    <property type="term" value="P:mRNA catabolic process"/>
    <property type="evidence" value="ECO:0007669"/>
    <property type="project" value="UniProtKB-UniRule"/>
</dbReference>
<dbReference type="GO" id="GO:0006396">
    <property type="term" value="P:RNA processing"/>
    <property type="evidence" value="ECO:0007669"/>
    <property type="project" value="InterPro"/>
</dbReference>
<dbReference type="CDD" id="cd02393">
    <property type="entry name" value="KH-I_PNPase"/>
    <property type="match status" value="1"/>
</dbReference>
<dbReference type="CDD" id="cd11363">
    <property type="entry name" value="RNase_PH_PNPase_1"/>
    <property type="match status" value="1"/>
</dbReference>
<dbReference type="CDD" id="cd11364">
    <property type="entry name" value="RNase_PH_PNPase_2"/>
    <property type="match status" value="1"/>
</dbReference>
<dbReference type="FunFam" id="2.40.50.140:FF:000023">
    <property type="entry name" value="Polyribonucleotide nucleotidyltransferase"/>
    <property type="match status" value="1"/>
</dbReference>
<dbReference type="FunFam" id="3.30.1370.10:FF:000001">
    <property type="entry name" value="Polyribonucleotide nucleotidyltransferase"/>
    <property type="match status" value="1"/>
</dbReference>
<dbReference type="FunFam" id="3.30.230.70:FF:000001">
    <property type="entry name" value="Polyribonucleotide nucleotidyltransferase"/>
    <property type="match status" value="1"/>
</dbReference>
<dbReference type="FunFam" id="3.30.230.70:FF:000002">
    <property type="entry name" value="Polyribonucleotide nucleotidyltransferase"/>
    <property type="match status" value="1"/>
</dbReference>
<dbReference type="Gene3D" id="3.30.230.70">
    <property type="entry name" value="GHMP Kinase, N-terminal domain"/>
    <property type="match status" value="2"/>
</dbReference>
<dbReference type="Gene3D" id="3.30.1370.10">
    <property type="entry name" value="K Homology domain, type 1"/>
    <property type="match status" value="1"/>
</dbReference>
<dbReference type="Gene3D" id="2.40.50.140">
    <property type="entry name" value="Nucleic acid-binding proteins"/>
    <property type="match status" value="1"/>
</dbReference>
<dbReference type="HAMAP" id="MF_01595">
    <property type="entry name" value="PNPase"/>
    <property type="match status" value="1"/>
</dbReference>
<dbReference type="InterPro" id="IPR001247">
    <property type="entry name" value="ExoRNase_PH_dom1"/>
</dbReference>
<dbReference type="InterPro" id="IPR015847">
    <property type="entry name" value="ExoRNase_PH_dom2"/>
</dbReference>
<dbReference type="InterPro" id="IPR036345">
    <property type="entry name" value="ExoRNase_PH_dom2_sf"/>
</dbReference>
<dbReference type="InterPro" id="IPR004087">
    <property type="entry name" value="KH_dom"/>
</dbReference>
<dbReference type="InterPro" id="IPR004088">
    <property type="entry name" value="KH_dom_type_1"/>
</dbReference>
<dbReference type="InterPro" id="IPR036612">
    <property type="entry name" value="KH_dom_type_1_sf"/>
</dbReference>
<dbReference type="InterPro" id="IPR012340">
    <property type="entry name" value="NA-bd_OB-fold"/>
</dbReference>
<dbReference type="InterPro" id="IPR012162">
    <property type="entry name" value="PNPase"/>
</dbReference>
<dbReference type="InterPro" id="IPR027408">
    <property type="entry name" value="PNPase/RNase_PH_dom_sf"/>
</dbReference>
<dbReference type="InterPro" id="IPR015848">
    <property type="entry name" value="PNPase_PH_RNA-bd_bac/org-type"/>
</dbReference>
<dbReference type="InterPro" id="IPR036456">
    <property type="entry name" value="PNPase_PH_RNA-bd_sf"/>
</dbReference>
<dbReference type="InterPro" id="IPR020568">
    <property type="entry name" value="Ribosomal_Su5_D2-typ_SF"/>
</dbReference>
<dbReference type="InterPro" id="IPR003029">
    <property type="entry name" value="S1_domain"/>
</dbReference>
<dbReference type="NCBIfam" id="TIGR03591">
    <property type="entry name" value="polynuc_phos"/>
    <property type="match status" value="1"/>
</dbReference>
<dbReference type="NCBIfam" id="NF008805">
    <property type="entry name" value="PRK11824.1"/>
    <property type="match status" value="1"/>
</dbReference>
<dbReference type="PANTHER" id="PTHR11252">
    <property type="entry name" value="POLYRIBONUCLEOTIDE NUCLEOTIDYLTRANSFERASE"/>
    <property type="match status" value="1"/>
</dbReference>
<dbReference type="PANTHER" id="PTHR11252:SF0">
    <property type="entry name" value="POLYRIBONUCLEOTIDE NUCLEOTIDYLTRANSFERASE 1, MITOCHONDRIAL"/>
    <property type="match status" value="1"/>
</dbReference>
<dbReference type="Pfam" id="PF00013">
    <property type="entry name" value="KH_1"/>
    <property type="match status" value="1"/>
</dbReference>
<dbReference type="Pfam" id="PF03726">
    <property type="entry name" value="PNPase"/>
    <property type="match status" value="1"/>
</dbReference>
<dbReference type="Pfam" id="PF01138">
    <property type="entry name" value="RNase_PH"/>
    <property type="match status" value="2"/>
</dbReference>
<dbReference type="Pfam" id="PF03725">
    <property type="entry name" value="RNase_PH_C"/>
    <property type="match status" value="2"/>
</dbReference>
<dbReference type="Pfam" id="PF00575">
    <property type="entry name" value="S1"/>
    <property type="match status" value="1"/>
</dbReference>
<dbReference type="PIRSF" id="PIRSF005499">
    <property type="entry name" value="PNPase"/>
    <property type="match status" value="1"/>
</dbReference>
<dbReference type="SMART" id="SM00322">
    <property type="entry name" value="KH"/>
    <property type="match status" value="1"/>
</dbReference>
<dbReference type="SMART" id="SM00316">
    <property type="entry name" value="S1"/>
    <property type="match status" value="1"/>
</dbReference>
<dbReference type="SUPFAM" id="SSF54791">
    <property type="entry name" value="Eukaryotic type KH-domain (KH-domain type I)"/>
    <property type="match status" value="1"/>
</dbReference>
<dbReference type="SUPFAM" id="SSF50249">
    <property type="entry name" value="Nucleic acid-binding proteins"/>
    <property type="match status" value="1"/>
</dbReference>
<dbReference type="SUPFAM" id="SSF46915">
    <property type="entry name" value="Polynucleotide phosphorylase/guanosine pentaphosphate synthase (PNPase/GPSI), domain 3"/>
    <property type="match status" value="1"/>
</dbReference>
<dbReference type="SUPFAM" id="SSF55666">
    <property type="entry name" value="Ribonuclease PH domain 2-like"/>
    <property type="match status" value="2"/>
</dbReference>
<dbReference type="SUPFAM" id="SSF54211">
    <property type="entry name" value="Ribosomal protein S5 domain 2-like"/>
    <property type="match status" value="2"/>
</dbReference>
<dbReference type="PROSITE" id="PS50084">
    <property type="entry name" value="KH_TYPE_1"/>
    <property type="match status" value="1"/>
</dbReference>
<dbReference type="PROSITE" id="PS50126">
    <property type="entry name" value="S1"/>
    <property type="match status" value="1"/>
</dbReference>
<organism>
    <name type="scientific">Streptococcus pyogenes serotype M28 (strain MGAS6180)</name>
    <dbReference type="NCBI Taxonomy" id="319701"/>
    <lineage>
        <taxon>Bacteria</taxon>
        <taxon>Bacillati</taxon>
        <taxon>Bacillota</taxon>
        <taxon>Bacilli</taxon>
        <taxon>Lactobacillales</taxon>
        <taxon>Streptococcaceae</taxon>
        <taxon>Streptococcus</taxon>
    </lineage>
</organism>
<sequence length="710" mass="77396">MSKQTFTTTFAGKPLVVEVGQVAKQANGATVVRYGESTVLTAAVMSKKMATGDFFPLQVNYEEKMYAAGKFPGGFMKREGRPSTDATLTARLIDRPIRPMFAEGFRNEVQVINTVLSYDENASAPMAAMFGSSLALSISDIPFNGPIAGVQVGYIDGEFIINPDKEQMEASLLELTVAGSKEAINMVESGAKELSEDIMLEALLKGHQAIQELIAFQEQIVAVVGKEKAEVELLQVDADLQADIVAKYNAQLQKAVQVEEKKAREAATEAVKEMVKAEYEERYAEDENLATIMRDVAEILEQMEHAEVRRLITEDKIRPDGRKIDEIRPLDAVVDFLPKVHGSGLFTRGQTQALSILTLAPMGETQIIDGLAPEYKKRFLHHYNFPQYSVGETGRYGAAGRREIGHGALGERALEQVLPSLEEFPYAIRLVAEVLESNGSSSQASICAGTLALMAGGVPIKAPVAGIAMGLISDGTNYTVLTDIQGLEDHFGDMDFKVAGTREGITALQMDIKIAGITPQILEEALAQAKKARFEILDVIEATIAEPRPELAPTAPKIDTIKIDVDKIKVVIGKGGETIDKIIAETGVKIDIDDEGNVSIYSSDQAAINRTKEIIAGLVREAKVGEVYHAKVVRIEKFGAFVNLFDKTDALVHISEIAWTRTTNVSDVLEVGEDVDVKVIKIDEKGRVDASMKALIPRPPKPEKKEEKHD</sequence>
<comment type="function">
    <text evidence="1">Involved in mRNA degradation. Catalyzes the phosphorolysis of single-stranded polyribonucleotides processively in the 3'- to 5'-direction.</text>
</comment>
<comment type="catalytic activity">
    <reaction evidence="1">
        <text>RNA(n+1) + phosphate = RNA(n) + a ribonucleoside 5'-diphosphate</text>
        <dbReference type="Rhea" id="RHEA:22096"/>
        <dbReference type="Rhea" id="RHEA-COMP:14527"/>
        <dbReference type="Rhea" id="RHEA-COMP:17342"/>
        <dbReference type="ChEBI" id="CHEBI:43474"/>
        <dbReference type="ChEBI" id="CHEBI:57930"/>
        <dbReference type="ChEBI" id="CHEBI:140395"/>
        <dbReference type="EC" id="2.7.7.8"/>
    </reaction>
</comment>
<comment type="cofactor">
    <cofactor evidence="1">
        <name>Mg(2+)</name>
        <dbReference type="ChEBI" id="CHEBI:18420"/>
    </cofactor>
</comment>
<comment type="subcellular location">
    <subcellularLocation>
        <location evidence="1">Cytoplasm</location>
    </subcellularLocation>
</comment>
<comment type="similarity">
    <text evidence="1">Belongs to the polyribonucleotide nucleotidyltransferase family.</text>
</comment>
<proteinExistence type="inferred from homology"/>
<protein>
    <recommendedName>
        <fullName evidence="1">Polyribonucleotide nucleotidyltransferase</fullName>
        <ecNumber evidence="1">2.7.7.8</ecNumber>
    </recommendedName>
    <alternativeName>
        <fullName evidence="1">Polynucleotide phosphorylase</fullName>
        <shortName evidence="1">PNPase</shortName>
    </alternativeName>
</protein>
<reference key="1">
    <citation type="journal article" date="2005" name="J. Infect. Dis.">
        <title>Genome sequence of a serotype M28 strain of group A Streptococcus: potential new insights into puerperal sepsis and bacterial disease specificity.</title>
        <authorList>
            <person name="Green N.M."/>
            <person name="Zhang S."/>
            <person name="Porcella S.F."/>
            <person name="Nagiec M.J."/>
            <person name="Barbian K.D."/>
            <person name="Beres S.B."/>
            <person name="Lefebvre R.B."/>
            <person name="Musser J.M."/>
        </authorList>
    </citation>
    <scope>NUCLEOTIDE SEQUENCE [LARGE SCALE GENOMIC DNA]</scope>
    <source>
        <strain>MGAS6180</strain>
    </source>
</reference>
<name>PNP_STRPM</name>
<keyword id="KW-0963">Cytoplasm</keyword>
<keyword id="KW-0460">Magnesium</keyword>
<keyword id="KW-0479">Metal-binding</keyword>
<keyword id="KW-0548">Nucleotidyltransferase</keyword>
<keyword id="KW-0694">RNA-binding</keyword>
<keyword id="KW-0808">Transferase</keyword>
<accession>Q48RA2</accession>
<evidence type="ECO:0000255" key="1">
    <source>
        <dbReference type="HAMAP-Rule" id="MF_01595"/>
    </source>
</evidence>
<evidence type="ECO:0000256" key="2">
    <source>
        <dbReference type="SAM" id="MobiDB-lite"/>
    </source>
</evidence>
<feature type="chain" id="PRO_0000329877" description="Polyribonucleotide nucleotidyltransferase">
    <location>
        <begin position="1"/>
        <end position="710"/>
    </location>
</feature>
<feature type="domain" description="KH" evidence="1">
    <location>
        <begin position="556"/>
        <end position="615"/>
    </location>
</feature>
<feature type="domain" description="S1 motif" evidence="1">
    <location>
        <begin position="625"/>
        <end position="693"/>
    </location>
</feature>
<feature type="region of interest" description="Disordered" evidence="2">
    <location>
        <begin position="691"/>
        <end position="710"/>
    </location>
</feature>
<feature type="compositionally biased region" description="Basic and acidic residues" evidence="2">
    <location>
        <begin position="700"/>
        <end position="710"/>
    </location>
</feature>
<feature type="binding site" evidence="1">
    <location>
        <position position="489"/>
    </location>
    <ligand>
        <name>Mg(2+)</name>
        <dbReference type="ChEBI" id="CHEBI:18420"/>
    </ligand>
</feature>
<feature type="binding site" evidence="1">
    <location>
        <position position="495"/>
    </location>
    <ligand>
        <name>Mg(2+)</name>
        <dbReference type="ChEBI" id="CHEBI:18420"/>
    </ligand>
</feature>
<gene>
    <name evidence="1" type="primary">pnp</name>
    <name type="ordered locus">M28_Spy1648</name>
</gene>